<gene>
    <name evidence="2" type="primary">ahpD</name>
    <name type="ordered locus">FRAAL4493</name>
</gene>
<proteinExistence type="inferred from homology"/>
<evidence type="ECO:0000250" key="1"/>
<evidence type="ECO:0000255" key="2">
    <source>
        <dbReference type="HAMAP-Rule" id="MF_01676"/>
    </source>
</evidence>
<name>AHPD_FRAAA</name>
<sequence length="185" mass="19828">MTVARLRELLPDYARDLRLNLGSVTSQSNLSAQQLWGTVLAAAIASRGRTVLVELEPEALDHLSAEAATAARTAAALMAMNNVYYRSLHLLEDEEYSRLRAGLRMNALANPGVDKVDVELWSLAVSAVNGCGRCLTAHEHELRGRGVAREVIQDAIRVASVVHAVAVTVEALETSSGTNRVAAAD</sequence>
<feature type="chain" id="PRO_0000359488" description="Alkyl hydroperoxide reductase AhpD">
    <location>
        <begin position="1"/>
        <end position="185"/>
    </location>
</feature>
<feature type="active site" description="Proton donor" evidence="2">
    <location>
        <position position="131"/>
    </location>
</feature>
<feature type="active site" description="Cysteine sulfenic acid (-SOH) intermediate" evidence="2">
    <location>
        <position position="134"/>
    </location>
</feature>
<feature type="disulfide bond" evidence="1">
    <location>
        <begin position="131"/>
        <end position="134"/>
    </location>
</feature>
<feature type="disulfide bond" description="Interchain (with AhpC); in linked form" evidence="2">
    <location>
        <position position="134"/>
    </location>
</feature>
<organism>
    <name type="scientific">Frankia alni (strain DSM 45986 / CECT 9034 / ACN14a)</name>
    <dbReference type="NCBI Taxonomy" id="326424"/>
    <lineage>
        <taxon>Bacteria</taxon>
        <taxon>Bacillati</taxon>
        <taxon>Actinomycetota</taxon>
        <taxon>Actinomycetes</taxon>
        <taxon>Frankiales</taxon>
        <taxon>Frankiaceae</taxon>
        <taxon>Frankia</taxon>
    </lineage>
</organism>
<protein>
    <recommendedName>
        <fullName evidence="2">Alkyl hydroperoxide reductase AhpD</fullName>
        <ecNumber evidence="2">1.11.1.28</ecNumber>
    </recommendedName>
    <alternativeName>
        <fullName evidence="2">Alkylhydroperoxidase AhpD</fullName>
    </alternativeName>
</protein>
<reference key="1">
    <citation type="journal article" date="2007" name="Genome Res.">
        <title>Genome characteristics of facultatively symbiotic Frankia sp. strains reflect host range and host plant biogeography.</title>
        <authorList>
            <person name="Normand P."/>
            <person name="Lapierre P."/>
            <person name="Tisa L.S."/>
            <person name="Gogarten J.P."/>
            <person name="Alloisio N."/>
            <person name="Bagnarol E."/>
            <person name="Bassi C.A."/>
            <person name="Berry A.M."/>
            <person name="Bickhart D.M."/>
            <person name="Choisne N."/>
            <person name="Couloux A."/>
            <person name="Cournoyer B."/>
            <person name="Cruveiller S."/>
            <person name="Daubin V."/>
            <person name="Demange N."/>
            <person name="Francino M.P."/>
            <person name="Goltsman E."/>
            <person name="Huang Y."/>
            <person name="Kopp O.R."/>
            <person name="Labarre L."/>
            <person name="Lapidus A."/>
            <person name="Lavire C."/>
            <person name="Marechal J."/>
            <person name="Martinez M."/>
            <person name="Mastronunzio J.E."/>
            <person name="Mullin B.C."/>
            <person name="Niemann J."/>
            <person name="Pujic P."/>
            <person name="Rawnsley T."/>
            <person name="Rouy Z."/>
            <person name="Schenowitz C."/>
            <person name="Sellstedt A."/>
            <person name="Tavares F."/>
            <person name="Tomkins J.P."/>
            <person name="Vallenet D."/>
            <person name="Valverde C."/>
            <person name="Wall L.G."/>
            <person name="Wang Y."/>
            <person name="Medigue C."/>
            <person name="Benson D.R."/>
        </authorList>
    </citation>
    <scope>NUCLEOTIDE SEQUENCE [LARGE SCALE GENOMIC DNA]</scope>
    <source>
        <strain>DSM 45986 / CECT 9034 / ACN14a</strain>
    </source>
</reference>
<comment type="function">
    <text evidence="2">Antioxidant protein with alkyl hydroperoxidase activity. Required for the reduction of the AhpC active site cysteine residues and for the regeneration of the AhpC enzyme activity.</text>
</comment>
<comment type="catalytic activity">
    <reaction evidence="2">
        <text>N(6)-[(R)-dihydrolipoyl]-L-lysyl-[lipoyl-carrier protein] + a hydroperoxide = N(6)-[(R)-lipoyl]-L-lysyl-[lipoyl-carrier protein] + an alcohol + H2O</text>
        <dbReference type="Rhea" id="RHEA:62636"/>
        <dbReference type="Rhea" id="RHEA-COMP:10502"/>
        <dbReference type="Rhea" id="RHEA-COMP:16355"/>
        <dbReference type="ChEBI" id="CHEBI:15377"/>
        <dbReference type="ChEBI" id="CHEBI:30879"/>
        <dbReference type="ChEBI" id="CHEBI:35924"/>
        <dbReference type="ChEBI" id="CHEBI:83099"/>
        <dbReference type="ChEBI" id="CHEBI:83100"/>
        <dbReference type="EC" id="1.11.1.28"/>
    </reaction>
</comment>
<comment type="subunit">
    <text evidence="2">Homotrimer.</text>
</comment>
<comment type="similarity">
    <text evidence="2">Belongs to the AhpD family.</text>
</comment>
<accession>Q0RH96</accession>
<dbReference type="EC" id="1.11.1.28" evidence="2"/>
<dbReference type="EMBL" id="CT573213">
    <property type="protein sequence ID" value="CAJ63135.1"/>
    <property type="molecule type" value="Genomic_DNA"/>
</dbReference>
<dbReference type="RefSeq" id="WP_011605614.1">
    <property type="nucleotide sequence ID" value="NC_008278.1"/>
</dbReference>
<dbReference type="SMR" id="Q0RH96"/>
<dbReference type="STRING" id="326424.FRAAL4493"/>
<dbReference type="PeroxiBase" id="4631">
    <property type="entry name" value="FalAhpD"/>
</dbReference>
<dbReference type="KEGG" id="fal:FRAAL4493"/>
<dbReference type="eggNOG" id="COG2128">
    <property type="taxonomic scope" value="Bacteria"/>
</dbReference>
<dbReference type="HOGENOM" id="CLU_105328_0_0_11"/>
<dbReference type="OrthoDB" id="9801997at2"/>
<dbReference type="Proteomes" id="UP000000657">
    <property type="component" value="Chromosome"/>
</dbReference>
<dbReference type="GO" id="GO:0008785">
    <property type="term" value="F:alkyl hydroperoxide reductase activity"/>
    <property type="evidence" value="ECO:0007669"/>
    <property type="project" value="UniProtKB-UniRule"/>
</dbReference>
<dbReference type="GO" id="GO:0015036">
    <property type="term" value="F:disulfide oxidoreductase activity"/>
    <property type="evidence" value="ECO:0007669"/>
    <property type="project" value="TreeGrafter"/>
</dbReference>
<dbReference type="GO" id="GO:0032843">
    <property type="term" value="F:hydroperoxide reductase activity"/>
    <property type="evidence" value="ECO:0007669"/>
    <property type="project" value="InterPro"/>
</dbReference>
<dbReference type="GO" id="GO:0051920">
    <property type="term" value="F:peroxiredoxin activity"/>
    <property type="evidence" value="ECO:0007669"/>
    <property type="project" value="InterPro"/>
</dbReference>
<dbReference type="GO" id="GO:0045454">
    <property type="term" value="P:cell redox homeostasis"/>
    <property type="evidence" value="ECO:0007669"/>
    <property type="project" value="TreeGrafter"/>
</dbReference>
<dbReference type="GO" id="GO:0006979">
    <property type="term" value="P:response to oxidative stress"/>
    <property type="evidence" value="ECO:0007669"/>
    <property type="project" value="InterPro"/>
</dbReference>
<dbReference type="Gene3D" id="1.20.1290.10">
    <property type="entry name" value="AhpD-like"/>
    <property type="match status" value="1"/>
</dbReference>
<dbReference type="HAMAP" id="MF_01676">
    <property type="entry name" value="AhpD"/>
    <property type="match status" value="1"/>
</dbReference>
<dbReference type="InterPro" id="IPR004674">
    <property type="entry name" value="AhpD"/>
</dbReference>
<dbReference type="InterPro" id="IPR029032">
    <property type="entry name" value="AhpD-like"/>
</dbReference>
<dbReference type="InterPro" id="IPR004675">
    <property type="entry name" value="AhpD_core"/>
</dbReference>
<dbReference type="InterPro" id="IPR003779">
    <property type="entry name" value="CMD-like"/>
</dbReference>
<dbReference type="NCBIfam" id="TIGR00777">
    <property type="entry name" value="ahpD"/>
    <property type="match status" value="1"/>
</dbReference>
<dbReference type="NCBIfam" id="TIGR00778">
    <property type="entry name" value="ahpD_dom"/>
    <property type="match status" value="1"/>
</dbReference>
<dbReference type="PANTHER" id="PTHR33930">
    <property type="entry name" value="ALKYL HYDROPEROXIDE REDUCTASE AHPD"/>
    <property type="match status" value="1"/>
</dbReference>
<dbReference type="PANTHER" id="PTHR33930:SF7">
    <property type="entry name" value="ALKYL HYDROPEROXIDE REDUCTASE AHPD"/>
    <property type="match status" value="1"/>
</dbReference>
<dbReference type="Pfam" id="PF02627">
    <property type="entry name" value="CMD"/>
    <property type="match status" value="1"/>
</dbReference>
<dbReference type="SUPFAM" id="SSF69118">
    <property type="entry name" value="AhpD-like"/>
    <property type="match status" value="1"/>
</dbReference>
<keyword id="KW-0049">Antioxidant</keyword>
<keyword id="KW-1015">Disulfide bond</keyword>
<keyword id="KW-0560">Oxidoreductase</keyword>
<keyword id="KW-0575">Peroxidase</keyword>
<keyword id="KW-0676">Redox-active center</keyword>
<keyword id="KW-1185">Reference proteome</keyword>